<sequence length="183" mass="20270">MNIIAGFQNNFSEGLYSKFKSYRYKVFVEHLGWELNCPHNEELDQFDKVDTAYVVAQDRDSNIIGCARLLPTTQPYLLGEIFPQLLNGIPLPCSPEIWELSRFSAVDFSNPPTTASQAVSSPVSIAILQEAINFARAQGAKQLITTSPLGVERLLRAAGFRAHRAGPPMTIDGYSMFACLIDV</sequence>
<proteinExistence type="evidence at transcript level"/>
<accession>A0A0A7XNA3</accession>
<feature type="chain" id="PRO_0000438127" description="Acyl-homoserine-lactone synthase">
    <location>
        <begin position="1"/>
        <end position="183"/>
    </location>
</feature>
<name>ANOI_ACINO</name>
<keyword id="KW-0071">Autoinducer synthesis</keyword>
<keyword id="KW-0673">Quorum sensing</keyword>
<keyword id="KW-0949">S-adenosyl-L-methionine</keyword>
<keyword id="KW-0808">Transferase</keyword>
<dbReference type="EC" id="2.3.1.184" evidence="1"/>
<dbReference type="EMBL" id="CP010368">
    <property type="protein sequence ID" value="AJB49806.1"/>
    <property type="molecule type" value="Genomic_DNA"/>
</dbReference>
<dbReference type="SMR" id="A0A0A7XNA3"/>
<dbReference type="STRING" id="106654.B7L44_20130"/>
<dbReference type="KEGG" id="ano:RR32_17480"/>
<dbReference type="PATRIC" id="fig|106654.21.peg.3488"/>
<dbReference type="eggNOG" id="COG3916">
    <property type="taxonomic scope" value="Bacteria"/>
</dbReference>
<dbReference type="GO" id="GO:0061579">
    <property type="term" value="F:N-acyl homoserine lactone synthase activity"/>
    <property type="evidence" value="ECO:0007669"/>
    <property type="project" value="UniProtKB-EC"/>
</dbReference>
<dbReference type="GO" id="GO:0009372">
    <property type="term" value="P:quorum sensing"/>
    <property type="evidence" value="ECO:0007669"/>
    <property type="project" value="UniProtKB-KW"/>
</dbReference>
<dbReference type="GO" id="GO:0007165">
    <property type="term" value="P:signal transduction"/>
    <property type="evidence" value="ECO:0007669"/>
    <property type="project" value="TreeGrafter"/>
</dbReference>
<dbReference type="Gene3D" id="3.40.630.30">
    <property type="match status" value="1"/>
</dbReference>
<dbReference type="InterPro" id="IPR016181">
    <property type="entry name" value="Acyl_CoA_acyltransferase"/>
</dbReference>
<dbReference type="InterPro" id="IPR001690">
    <property type="entry name" value="Autoind_synthase"/>
</dbReference>
<dbReference type="PANTHER" id="PTHR39322">
    <property type="entry name" value="ACYL-HOMOSERINE-LACTONE SYNTHASE"/>
    <property type="match status" value="1"/>
</dbReference>
<dbReference type="PANTHER" id="PTHR39322:SF1">
    <property type="entry name" value="ISOVALERYL-HOMOSERINE LACTONE SYNTHASE"/>
    <property type="match status" value="1"/>
</dbReference>
<dbReference type="Pfam" id="PF00765">
    <property type="entry name" value="Autoind_synth"/>
    <property type="match status" value="1"/>
</dbReference>
<dbReference type="PRINTS" id="PR01549">
    <property type="entry name" value="AUTOINDCRSYN"/>
</dbReference>
<dbReference type="SUPFAM" id="SSF55729">
    <property type="entry name" value="Acyl-CoA N-acyltransferases (Nat)"/>
    <property type="match status" value="1"/>
</dbReference>
<dbReference type="PROSITE" id="PS51187">
    <property type="entry name" value="AUTOINDUCER_SYNTH_2"/>
    <property type="match status" value="1"/>
</dbReference>
<evidence type="ECO:0000250" key="1">
    <source>
        <dbReference type="UniProtKB" id="B0FLN1"/>
    </source>
</evidence>
<evidence type="ECO:0000255" key="2">
    <source>
        <dbReference type="PROSITE-ProRule" id="PRU00533"/>
    </source>
</evidence>
<evidence type="ECO:0000269" key="3">
    <source>
    </source>
</evidence>
<evidence type="ECO:0000303" key="4">
    <source>
    </source>
</evidence>
<evidence type="ECO:0000305" key="5"/>
<evidence type="ECO:0000312" key="6">
    <source>
        <dbReference type="EMBL" id="AJB49806.1"/>
    </source>
</evidence>
<gene>
    <name evidence="4" type="primary">anoI</name>
    <name evidence="6" type="ORF">RR32_17480</name>
</gene>
<reference key="1">
    <citation type="submission" date="2014-12" db="EMBL/GenBank/DDBJ databases">
        <authorList>
            <person name="McCorrison J."/>
            <person name="Sanka R."/>
            <person name="Adams M."/>
            <person name="Brinkac L."/>
            <person name="Sutton G."/>
            <person name="Bonomo R."/>
            <person name="Rojas L."/>
        </authorList>
    </citation>
    <scope>NUCLEOTIDE SEQUENCE [LARGE SCALE GENOMIC DNA]</scope>
    <source>
        <strain>6411</strain>
    </source>
</reference>
<reference key="2">
    <citation type="journal article" date="2015" name="J. Microbiol. Biotechnol.">
        <title>Role of LuxIR homologue AnoIR in Acinetobacter nosocomialis and the effect of virstatin on the expression of anoR gene.</title>
        <authorList>
            <person name="Oh M.H."/>
            <person name="Choi C.H."/>
        </authorList>
    </citation>
    <scope>FUNCTION</scope>
    <scope>INDUCTION</scope>
    <scope>DISRUPTION PHENOTYPE</scope>
    <source>
        <strain>ATCC 17903</strain>
    </source>
</reference>
<comment type="function">
    <text evidence="3">Involved in the synthesis of the acyl-homoserine lactone (AHL) signal N-(3-hydroxydodecanoyl)-L-HSL (3-hydroxy-C(12)-HSL or OH-dDHL). Probably part of a quorum-sensing system with AnoR.</text>
</comment>
<comment type="catalytic activity">
    <reaction evidence="1">
        <text>a fatty acyl-[ACP] + S-adenosyl-L-methionine = an N-acyl-L-homoserine lactone + S-methyl-5'-thioadenosine + holo-[ACP] + H(+)</text>
        <dbReference type="Rhea" id="RHEA:10096"/>
        <dbReference type="Rhea" id="RHEA-COMP:9685"/>
        <dbReference type="Rhea" id="RHEA-COMP:14125"/>
        <dbReference type="ChEBI" id="CHEBI:15378"/>
        <dbReference type="ChEBI" id="CHEBI:17509"/>
        <dbReference type="ChEBI" id="CHEBI:55474"/>
        <dbReference type="ChEBI" id="CHEBI:59789"/>
        <dbReference type="ChEBI" id="CHEBI:64479"/>
        <dbReference type="ChEBI" id="CHEBI:138651"/>
        <dbReference type="EC" id="2.3.1.184"/>
    </reaction>
</comment>
<comment type="induction">
    <text evidence="3">Positively regulated by AnoR.</text>
</comment>
<comment type="disruption phenotype">
    <text evidence="3">Deletion mutant does not produce OH-dDHL.</text>
</comment>
<comment type="similarity">
    <text evidence="2">Belongs to the autoinducer synthase family.</text>
</comment>
<protein>
    <recommendedName>
        <fullName evidence="5">Acyl-homoserine-lactone synthase</fullName>
        <ecNumber evidence="1">2.3.1.184</ecNumber>
    </recommendedName>
    <alternativeName>
        <fullName evidence="5">Autoinducer synthesis protein AnoI</fullName>
    </alternativeName>
</protein>
<organism>
    <name type="scientific">Acinetobacter nosocomialis</name>
    <dbReference type="NCBI Taxonomy" id="106654"/>
    <lineage>
        <taxon>Bacteria</taxon>
        <taxon>Pseudomonadati</taxon>
        <taxon>Pseudomonadota</taxon>
        <taxon>Gammaproteobacteria</taxon>
        <taxon>Moraxellales</taxon>
        <taxon>Moraxellaceae</taxon>
        <taxon>Acinetobacter</taxon>
        <taxon>Acinetobacter calcoaceticus/baumannii complex</taxon>
    </lineage>
</organism>